<reference key="1">
    <citation type="journal article" date="2000" name="Science">
        <title>The genome sequence of Drosophila melanogaster.</title>
        <authorList>
            <person name="Adams M.D."/>
            <person name="Celniker S.E."/>
            <person name="Holt R.A."/>
            <person name="Evans C.A."/>
            <person name="Gocayne J.D."/>
            <person name="Amanatides P.G."/>
            <person name="Scherer S.E."/>
            <person name="Li P.W."/>
            <person name="Hoskins R.A."/>
            <person name="Galle R.F."/>
            <person name="George R.A."/>
            <person name="Lewis S.E."/>
            <person name="Richards S."/>
            <person name="Ashburner M."/>
            <person name="Henderson S.N."/>
            <person name="Sutton G.G."/>
            <person name="Wortman J.R."/>
            <person name="Yandell M.D."/>
            <person name="Zhang Q."/>
            <person name="Chen L.X."/>
            <person name="Brandon R.C."/>
            <person name="Rogers Y.-H.C."/>
            <person name="Blazej R.G."/>
            <person name="Champe M."/>
            <person name="Pfeiffer B.D."/>
            <person name="Wan K.H."/>
            <person name="Doyle C."/>
            <person name="Baxter E.G."/>
            <person name="Helt G."/>
            <person name="Nelson C.R."/>
            <person name="Miklos G.L.G."/>
            <person name="Abril J.F."/>
            <person name="Agbayani A."/>
            <person name="An H.-J."/>
            <person name="Andrews-Pfannkoch C."/>
            <person name="Baldwin D."/>
            <person name="Ballew R.M."/>
            <person name="Basu A."/>
            <person name="Baxendale J."/>
            <person name="Bayraktaroglu L."/>
            <person name="Beasley E.M."/>
            <person name="Beeson K.Y."/>
            <person name="Benos P.V."/>
            <person name="Berman B.P."/>
            <person name="Bhandari D."/>
            <person name="Bolshakov S."/>
            <person name="Borkova D."/>
            <person name="Botchan M.R."/>
            <person name="Bouck J."/>
            <person name="Brokstein P."/>
            <person name="Brottier P."/>
            <person name="Burtis K.C."/>
            <person name="Busam D.A."/>
            <person name="Butler H."/>
            <person name="Cadieu E."/>
            <person name="Center A."/>
            <person name="Chandra I."/>
            <person name="Cherry J.M."/>
            <person name="Cawley S."/>
            <person name="Dahlke C."/>
            <person name="Davenport L.B."/>
            <person name="Davies P."/>
            <person name="de Pablos B."/>
            <person name="Delcher A."/>
            <person name="Deng Z."/>
            <person name="Mays A.D."/>
            <person name="Dew I."/>
            <person name="Dietz S.M."/>
            <person name="Dodson K."/>
            <person name="Doup L.E."/>
            <person name="Downes M."/>
            <person name="Dugan-Rocha S."/>
            <person name="Dunkov B.C."/>
            <person name="Dunn P."/>
            <person name="Durbin K.J."/>
            <person name="Evangelista C.C."/>
            <person name="Ferraz C."/>
            <person name="Ferriera S."/>
            <person name="Fleischmann W."/>
            <person name="Fosler C."/>
            <person name="Gabrielian A.E."/>
            <person name="Garg N.S."/>
            <person name="Gelbart W.M."/>
            <person name="Glasser K."/>
            <person name="Glodek A."/>
            <person name="Gong F."/>
            <person name="Gorrell J.H."/>
            <person name="Gu Z."/>
            <person name="Guan P."/>
            <person name="Harris M."/>
            <person name="Harris N.L."/>
            <person name="Harvey D.A."/>
            <person name="Heiman T.J."/>
            <person name="Hernandez J.R."/>
            <person name="Houck J."/>
            <person name="Hostin D."/>
            <person name="Houston K.A."/>
            <person name="Howland T.J."/>
            <person name="Wei M.-H."/>
            <person name="Ibegwam C."/>
            <person name="Jalali M."/>
            <person name="Kalush F."/>
            <person name="Karpen G.H."/>
            <person name="Ke Z."/>
            <person name="Kennison J.A."/>
            <person name="Ketchum K.A."/>
            <person name="Kimmel B.E."/>
            <person name="Kodira C.D."/>
            <person name="Kraft C.L."/>
            <person name="Kravitz S."/>
            <person name="Kulp D."/>
            <person name="Lai Z."/>
            <person name="Lasko P."/>
            <person name="Lei Y."/>
            <person name="Levitsky A.A."/>
            <person name="Li J.H."/>
            <person name="Li Z."/>
            <person name="Liang Y."/>
            <person name="Lin X."/>
            <person name="Liu X."/>
            <person name="Mattei B."/>
            <person name="McIntosh T.C."/>
            <person name="McLeod M.P."/>
            <person name="McPherson D."/>
            <person name="Merkulov G."/>
            <person name="Milshina N.V."/>
            <person name="Mobarry C."/>
            <person name="Morris J."/>
            <person name="Moshrefi A."/>
            <person name="Mount S.M."/>
            <person name="Moy M."/>
            <person name="Murphy B."/>
            <person name="Murphy L."/>
            <person name="Muzny D.M."/>
            <person name="Nelson D.L."/>
            <person name="Nelson D.R."/>
            <person name="Nelson K.A."/>
            <person name="Nixon K."/>
            <person name="Nusskern D.R."/>
            <person name="Pacleb J.M."/>
            <person name="Palazzolo M."/>
            <person name="Pittman G.S."/>
            <person name="Pan S."/>
            <person name="Pollard J."/>
            <person name="Puri V."/>
            <person name="Reese M.G."/>
            <person name="Reinert K."/>
            <person name="Remington K."/>
            <person name="Saunders R.D.C."/>
            <person name="Scheeler F."/>
            <person name="Shen H."/>
            <person name="Shue B.C."/>
            <person name="Siden-Kiamos I."/>
            <person name="Simpson M."/>
            <person name="Skupski M.P."/>
            <person name="Smith T.J."/>
            <person name="Spier E."/>
            <person name="Spradling A.C."/>
            <person name="Stapleton M."/>
            <person name="Strong R."/>
            <person name="Sun E."/>
            <person name="Svirskas R."/>
            <person name="Tector C."/>
            <person name="Turner R."/>
            <person name="Venter E."/>
            <person name="Wang A.H."/>
            <person name="Wang X."/>
            <person name="Wang Z.-Y."/>
            <person name="Wassarman D.A."/>
            <person name="Weinstock G.M."/>
            <person name="Weissenbach J."/>
            <person name="Williams S.M."/>
            <person name="Woodage T."/>
            <person name="Worley K.C."/>
            <person name="Wu D."/>
            <person name="Yang S."/>
            <person name="Yao Q.A."/>
            <person name="Ye J."/>
            <person name="Yeh R.-F."/>
            <person name="Zaveri J.S."/>
            <person name="Zhan M."/>
            <person name="Zhang G."/>
            <person name="Zhao Q."/>
            <person name="Zheng L."/>
            <person name="Zheng X.H."/>
            <person name="Zhong F.N."/>
            <person name="Zhong W."/>
            <person name="Zhou X."/>
            <person name="Zhu S.C."/>
            <person name="Zhu X."/>
            <person name="Smith H.O."/>
            <person name="Gibbs R.A."/>
            <person name="Myers E.W."/>
            <person name="Rubin G.M."/>
            <person name="Venter J.C."/>
        </authorList>
    </citation>
    <scope>NUCLEOTIDE SEQUENCE [LARGE SCALE GENOMIC DNA]</scope>
    <source>
        <strain>Berkeley</strain>
    </source>
</reference>
<reference key="2">
    <citation type="journal article" date="2002" name="Genome Biol.">
        <title>Annotation of the Drosophila melanogaster euchromatic genome: a systematic review.</title>
        <authorList>
            <person name="Misra S."/>
            <person name="Crosby M.A."/>
            <person name="Mungall C.J."/>
            <person name="Matthews B.B."/>
            <person name="Campbell K.S."/>
            <person name="Hradecky P."/>
            <person name="Huang Y."/>
            <person name="Kaminker J.S."/>
            <person name="Millburn G.H."/>
            <person name="Prochnik S.E."/>
            <person name="Smith C.D."/>
            <person name="Tupy J.L."/>
            <person name="Whitfield E.J."/>
            <person name="Bayraktaroglu L."/>
            <person name="Berman B.P."/>
            <person name="Bettencourt B.R."/>
            <person name="Celniker S.E."/>
            <person name="de Grey A.D.N.J."/>
            <person name="Drysdale R.A."/>
            <person name="Harris N.L."/>
            <person name="Richter J."/>
            <person name="Russo S."/>
            <person name="Schroeder A.J."/>
            <person name="Shu S.Q."/>
            <person name="Stapleton M."/>
            <person name="Yamada C."/>
            <person name="Ashburner M."/>
            <person name="Gelbart W.M."/>
            <person name="Rubin G.M."/>
            <person name="Lewis S.E."/>
        </authorList>
    </citation>
    <scope>GENOME REANNOTATION</scope>
    <source>
        <strain>Berkeley</strain>
    </source>
</reference>
<reference key="3">
    <citation type="journal article" date="2002" name="Genome Biol.">
        <title>A Drosophila full-length cDNA resource.</title>
        <authorList>
            <person name="Stapleton M."/>
            <person name="Carlson J.W."/>
            <person name="Brokstein P."/>
            <person name="Yu C."/>
            <person name="Champe M."/>
            <person name="George R.A."/>
            <person name="Guarin H."/>
            <person name="Kronmiller B."/>
            <person name="Pacleb J.M."/>
            <person name="Park S."/>
            <person name="Wan K.H."/>
            <person name="Rubin G.M."/>
            <person name="Celniker S.E."/>
        </authorList>
    </citation>
    <scope>NUCLEOTIDE SEQUENCE [LARGE SCALE MRNA]</scope>
    <source>
        <strain>Berkeley</strain>
    </source>
</reference>
<reference key="4">
    <citation type="journal article" date="2008" name="J. Proteome Res.">
        <title>Phosphoproteome analysis of Drosophila melanogaster embryos.</title>
        <authorList>
            <person name="Zhai B."/>
            <person name="Villen J."/>
            <person name="Beausoleil S.A."/>
            <person name="Mintseris J."/>
            <person name="Gygi S.P."/>
        </authorList>
    </citation>
    <scope>PHOSPHORYLATION [LARGE SCALE ANALYSIS] AT THR-101; SER-143; SER-146; SER-691; SER-693 AND SER-705</scope>
    <scope>IDENTIFICATION BY MASS SPECTROMETRY</scope>
    <source>
        <tissue>Embryo</tissue>
    </source>
</reference>
<reference key="5">
    <citation type="journal article" date="2022" name="J. Cell Sci.">
        <title>Reduction of nucleolar NOC1 leads to the accumulation of pre-rRNAs and induces Xrp1, affecting growth and resulting in cell competition.</title>
        <authorList>
            <person name="Destefanis F."/>
            <person name="Manara V."/>
            <person name="Santarelli S."/>
            <person name="Zola S."/>
            <person name="Brambilla M."/>
            <person name="Viola G."/>
            <person name="Maragno P."/>
            <person name="Signoria I."/>
            <person name="Viero G."/>
            <person name="Pasini M.E."/>
            <person name="Penzo M."/>
            <person name="Bellosta P."/>
        </authorList>
    </citation>
    <scope>DISRUPTION PHENOTYPE</scope>
</reference>
<protein>
    <recommendedName>
        <fullName evidence="5">Nucleolar complex protein 2</fullName>
    </recommendedName>
</protein>
<sequence length="766" mass="86631">MKLATKKIKTLGKSKPDLSKKKPAKDAIRKTKPQTTSETKVTPRNPKQKVAEPVKNGKTTKKGFKKSHKEELEGLKDIDPEFYDFLKNNDKKLLDFNLLDTDDDDDEEGDEEDKEDTVTKESKDDEDDEEKYHKPSKDLEVASDESDFEVDEEDDAAAGGIQKITLNLLHQWEQQLGQANISIDIVRKVIQAFNSALASISADGADGGENKHNAAAFKVVGAAAFNGVIQLCVIHLQPAIIRLLGVRPNSSLPLHKHKKWVKVRGCLRYYLTDLIRLVEQVSSPNILGVLLKHLHQMAGMVVPFSALGKTILKRLVVLWSTGDETVRVLAFLCILKITRKQQATMLNHVLKAMYLAYVRNSKFVSPNTLPGINFMRRSLVEMFALDLNVSYQHVFLYIRQLAIHLRNAVILKKKDSFQAVYNWQFINSLRLWADLLGASANKPQLQPLIYPLVTIATGVIRLIPTAQYFPLRFHCLQTLISLAKETNTYVPVLPLIVEVLKSNTFNRKHSAVSMKPVQFTCVLRLNKGQLAENGFRDEVIEQVCGLLLEYLAHESTSLAFSDLVVPTVMAIKTYLKECRNANYARKLKQLLEKIQESARFIEQQRGKSSVTFDIKDAQAVAAWEQQLRLKRTPLDVYYASWLKTHETKKRRQAAHTDEINADYDVPKLKKLPVKTGVPVRNENGEVELFPSDSEDEGDDGLHLGSDDDDDEDVQEEEEVEVEHPKAKKAKKEKPEKQKPRPATVEDDYDEAGGAVDIVKDLDLNEW</sequence>
<dbReference type="EMBL" id="AE014134">
    <property type="protein sequence ID" value="AAF53971.1"/>
    <property type="molecule type" value="Genomic_DNA"/>
</dbReference>
<dbReference type="EMBL" id="AY061505">
    <property type="protein sequence ID" value="AAL29053.1"/>
    <property type="molecule type" value="mRNA"/>
</dbReference>
<dbReference type="RefSeq" id="NP_610095.1">
    <property type="nucleotide sequence ID" value="NM_136251.4"/>
</dbReference>
<dbReference type="SMR" id="Q9VIF0"/>
<dbReference type="BioGRID" id="61341">
    <property type="interactions" value="7"/>
</dbReference>
<dbReference type="DIP" id="DIP-21304N"/>
<dbReference type="FunCoup" id="Q9VIF0">
    <property type="interactions" value="1468"/>
</dbReference>
<dbReference type="IntAct" id="Q9VIF0">
    <property type="interactions" value="2"/>
</dbReference>
<dbReference type="STRING" id="7227.FBpp0081001"/>
<dbReference type="iPTMnet" id="Q9VIF0"/>
<dbReference type="PaxDb" id="7227-FBpp0081001"/>
<dbReference type="EnsemblMetazoa" id="FBtr0081472">
    <property type="protein sequence ID" value="FBpp0081001"/>
    <property type="gene ID" value="FBgn0032925"/>
</dbReference>
<dbReference type="GeneID" id="35386"/>
<dbReference type="KEGG" id="dme:Dmel_CG9246"/>
<dbReference type="UCSC" id="CG9246-RA">
    <property type="organism name" value="d. melanogaster"/>
</dbReference>
<dbReference type="AGR" id="FB:FBgn0032925"/>
<dbReference type="CTD" id="35386"/>
<dbReference type="FlyBase" id="FBgn0032925">
    <property type="gene designation" value="Noc2"/>
</dbReference>
<dbReference type="VEuPathDB" id="VectorBase:FBgn0032925"/>
<dbReference type="eggNOG" id="KOG2256">
    <property type="taxonomic scope" value="Eukaryota"/>
</dbReference>
<dbReference type="GeneTree" id="ENSGT00390000010057"/>
<dbReference type="HOGENOM" id="CLU_011272_1_1_1"/>
<dbReference type="InParanoid" id="Q9VIF0"/>
<dbReference type="OMA" id="GCLRYYL"/>
<dbReference type="OrthoDB" id="10266662at2759"/>
<dbReference type="PhylomeDB" id="Q9VIF0"/>
<dbReference type="Reactome" id="R-DME-6804756">
    <property type="pathway name" value="Regulation of TP53 Activity through Phosphorylation"/>
</dbReference>
<dbReference type="BioGRID-ORCS" id="35386">
    <property type="hits" value="0 hits in 1 CRISPR screen"/>
</dbReference>
<dbReference type="GenomeRNAi" id="35386"/>
<dbReference type="PRO" id="PR:Q9VIF0"/>
<dbReference type="Proteomes" id="UP000000803">
    <property type="component" value="Chromosome 2L"/>
</dbReference>
<dbReference type="Bgee" id="FBgn0032925">
    <property type="expression patterns" value="Expressed in posterior terminal follicle cell in ovary and 94 other cell types or tissues"/>
</dbReference>
<dbReference type="GO" id="GO:0030690">
    <property type="term" value="C:Noc1p-Noc2p complex"/>
    <property type="evidence" value="ECO:0000250"/>
    <property type="project" value="FlyBase"/>
</dbReference>
<dbReference type="GO" id="GO:0030691">
    <property type="term" value="C:Noc2p-Noc3p complex"/>
    <property type="evidence" value="ECO:0000250"/>
    <property type="project" value="FlyBase"/>
</dbReference>
<dbReference type="GO" id="GO:0005730">
    <property type="term" value="C:nucleolus"/>
    <property type="evidence" value="ECO:0000250"/>
    <property type="project" value="FlyBase"/>
</dbReference>
<dbReference type="GO" id="GO:0005654">
    <property type="term" value="C:nucleoplasm"/>
    <property type="evidence" value="ECO:0000318"/>
    <property type="project" value="GO_Central"/>
</dbReference>
<dbReference type="GO" id="GO:0042393">
    <property type="term" value="F:histone binding"/>
    <property type="evidence" value="ECO:0000318"/>
    <property type="project" value="GO_Central"/>
</dbReference>
<dbReference type="GO" id="GO:0003714">
    <property type="term" value="F:transcription corepressor activity"/>
    <property type="evidence" value="ECO:0000318"/>
    <property type="project" value="GO_Central"/>
</dbReference>
<dbReference type="GO" id="GO:0000122">
    <property type="term" value="P:negative regulation of transcription by RNA polymerase II"/>
    <property type="evidence" value="ECO:0000318"/>
    <property type="project" value="GO_Central"/>
</dbReference>
<dbReference type="GO" id="GO:0042273">
    <property type="term" value="P:ribosomal large subunit biogenesis"/>
    <property type="evidence" value="ECO:0000318"/>
    <property type="project" value="GO_Central"/>
</dbReference>
<dbReference type="InterPro" id="IPR016024">
    <property type="entry name" value="ARM-type_fold"/>
</dbReference>
<dbReference type="InterPro" id="IPR005343">
    <property type="entry name" value="Noc2"/>
</dbReference>
<dbReference type="PANTHER" id="PTHR12687">
    <property type="entry name" value="NUCLEOLAR COMPLEX 2 AND RAD4-RELATED"/>
    <property type="match status" value="1"/>
</dbReference>
<dbReference type="PANTHER" id="PTHR12687:SF4">
    <property type="entry name" value="NUCLEOLAR COMPLEX PROTEIN 2 HOMOLOG"/>
    <property type="match status" value="1"/>
</dbReference>
<dbReference type="Pfam" id="PF03715">
    <property type="entry name" value="Noc2"/>
    <property type="match status" value="1"/>
</dbReference>
<dbReference type="SUPFAM" id="SSF48371">
    <property type="entry name" value="ARM repeat"/>
    <property type="match status" value="1"/>
</dbReference>
<comment type="subcellular location">
    <subcellularLocation>
        <location evidence="1">Nucleus</location>
    </subcellularLocation>
</comment>
<comment type="disruption phenotype">
    <text evidence="4">Ubiquitous RNAi-mediated knock-down is lethal between first and second instar with reduced larval size (PubMed:36314272). Conditional RNAi-mediated knock-down in proliferating cells of the eye and antenna imaginal discs is viable but results in small eye size and disorganized ommatidia, possibly due to excessive apoptosis (PubMed:36314272). Conditional RNAi-mediated knock-down in cells of the prothoracic gland impedes pupation, probably due to reduced ecdysone hormone levels (PubMed:36314272). Conditional RNAi-mediated knock-down in fat body cells delays larval development, induces dyslipidemia, and is lethal between late third instar and pupal stages (PubMed:36314272).</text>
</comment>
<comment type="similarity">
    <text evidence="6">Belongs to the NOC2 family.</text>
</comment>
<proteinExistence type="evidence at protein level"/>
<organism evidence="8">
    <name type="scientific">Drosophila melanogaster</name>
    <name type="common">Fruit fly</name>
    <dbReference type="NCBI Taxonomy" id="7227"/>
    <lineage>
        <taxon>Eukaryota</taxon>
        <taxon>Metazoa</taxon>
        <taxon>Ecdysozoa</taxon>
        <taxon>Arthropoda</taxon>
        <taxon>Hexapoda</taxon>
        <taxon>Insecta</taxon>
        <taxon>Pterygota</taxon>
        <taxon>Neoptera</taxon>
        <taxon>Endopterygota</taxon>
        <taxon>Diptera</taxon>
        <taxon>Brachycera</taxon>
        <taxon>Muscomorpha</taxon>
        <taxon>Ephydroidea</taxon>
        <taxon>Drosophilidae</taxon>
        <taxon>Drosophila</taxon>
        <taxon>Sophophora</taxon>
    </lineage>
</organism>
<keyword id="KW-0539">Nucleus</keyword>
<keyword id="KW-0597">Phosphoprotein</keyword>
<keyword id="KW-1185">Reference proteome</keyword>
<evidence type="ECO:0000250" key="1">
    <source>
        <dbReference type="UniProtKB" id="P39744"/>
    </source>
</evidence>
<evidence type="ECO:0000256" key="2">
    <source>
        <dbReference type="SAM" id="MobiDB-lite"/>
    </source>
</evidence>
<evidence type="ECO:0000269" key="3">
    <source>
    </source>
</evidence>
<evidence type="ECO:0000269" key="4">
    <source>
    </source>
</evidence>
<evidence type="ECO:0000303" key="5">
    <source>
    </source>
</evidence>
<evidence type="ECO:0000305" key="6"/>
<evidence type="ECO:0000312" key="7">
    <source>
        <dbReference type="FlyBase" id="FBgn0032925"/>
    </source>
</evidence>
<evidence type="ECO:0000312" key="8">
    <source>
        <dbReference type="Proteomes" id="UP000000803"/>
    </source>
</evidence>
<feature type="chain" id="PRO_0000121050" description="Nucleolar complex protein 2">
    <location>
        <begin position="1"/>
        <end position="766"/>
    </location>
</feature>
<feature type="region of interest" description="Disordered" evidence="2">
    <location>
        <begin position="1"/>
        <end position="73"/>
    </location>
</feature>
<feature type="region of interest" description="Disordered" evidence="2">
    <location>
        <begin position="100"/>
        <end position="154"/>
    </location>
</feature>
<feature type="region of interest" description="Disordered" evidence="2">
    <location>
        <begin position="674"/>
        <end position="766"/>
    </location>
</feature>
<feature type="compositionally biased region" description="Basic residues" evidence="2">
    <location>
        <begin position="1"/>
        <end position="12"/>
    </location>
</feature>
<feature type="compositionally biased region" description="Basic and acidic residues" evidence="2">
    <location>
        <begin position="14"/>
        <end position="29"/>
    </location>
</feature>
<feature type="compositionally biased region" description="Polar residues" evidence="2">
    <location>
        <begin position="33"/>
        <end position="42"/>
    </location>
</feature>
<feature type="compositionally biased region" description="Basic residues" evidence="2">
    <location>
        <begin position="58"/>
        <end position="67"/>
    </location>
</feature>
<feature type="compositionally biased region" description="Acidic residues" evidence="2">
    <location>
        <begin position="100"/>
        <end position="115"/>
    </location>
</feature>
<feature type="compositionally biased region" description="Basic and acidic residues" evidence="2">
    <location>
        <begin position="130"/>
        <end position="140"/>
    </location>
</feature>
<feature type="compositionally biased region" description="Acidic residues" evidence="2">
    <location>
        <begin position="141"/>
        <end position="154"/>
    </location>
</feature>
<feature type="compositionally biased region" description="Acidic residues" evidence="2">
    <location>
        <begin position="706"/>
        <end position="720"/>
    </location>
</feature>
<feature type="compositionally biased region" description="Basic and acidic residues" evidence="2">
    <location>
        <begin position="757"/>
        <end position="766"/>
    </location>
</feature>
<feature type="modified residue" description="Phosphothreonine" evidence="3">
    <location>
        <position position="101"/>
    </location>
</feature>
<feature type="modified residue" description="Phosphoserine" evidence="3">
    <location>
        <position position="143"/>
    </location>
</feature>
<feature type="modified residue" description="Phosphoserine" evidence="3">
    <location>
        <position position="146"/>
    </location>
</feature>
<feature type="modified residue" description="Phosphoserine" evidence="3">
    <location>
        <position position="691"/>
    </location>
</feature>
<feature type="modified residue" description="Phosphoserine" evidence="3">
    <location>
        <position position="693"/>
    </location>
</feature>
<feature type="modified residue" description="Phosphoserine" evidence="3">
    <location>
        <position position="705"/>
    </location>
</feature>
<name>NOC2L_DROME</name>
<accession>Q9VIF0</accession>
<gene>
    <name evidence="5 7" type="primary">Noc2</name>
    <name evidence="7" type="ORF">CG9246</name>
</gene>